<feature type="chain" id="PRO_0000125316" description="Large ribosomal subunit protein uL22c">
    <location>
        <begin position="1"/>
        <end position="149"/>
    </location>
</feature>
<keyword id="KW-0150">Chloroplast</keyword>
<keyword id="KW-0934">Plastid</keyword>
<keyword id="KW-0687">Ribonucleoprotein</keyword>
<keyword id="KW-0689">Ribosomal protein</keyword>
<keyword id="KW-0694">RNA-binding</keyword>
<keyword id="KW-0699">rRNA-binding</keyword>
<organism>
    <name type="scientific">Oryza sativa</name>
    <name type="common">Rice</name>
    <dbReference type="NCBI Taxonomy" id="4530"/>
    <lineage>
        <taxon>Eukaryota</taxon>
        <taxon>Viridiplantae</taxon>
        <taxon>Streptophyta</taxon>
        <taxon>Embryophyta</taxon>
        <taxon>Tracheophyta</taxon>
        <taxon>Spermatophyta</taxon>
        <taxon>Magnoliopsida</taxon>
        <taxon>Liliopsida</taxon>
        <taxon>Poales</taxon>
        <taxon>Poaceae</taxon>
        <taxon>BOP clade</taxon>
        <taxon>Oryzoideae</taxon>
        <taxon>Oryzeae</taxon>
        <taxon>Oryzinae</taxon>
        <taxon>Oryza</taxon>
    </lineage>
</organism>
<name>RK22_ORYSA</name>
<comment type="function">
    <text evidence="1">This protein binds specifically to 23S rRNA.</text>
</comment>
<comment type="function">
    <text evidence="1">The globular domain of the protein is located near the polypeptide exit tunnel on the outside of the subunit, while an extended beta-hairpin is found that lines the wall of the exit tunnel in the center of the 70S ribosome.</text>
</comment>
<comment type="subunit">
    <text evidence="1">Part of the 50S ribosomal subunit.</text>
</comment>
<comment type="subcellular location">
    <subcellularLocation>
        <location>Plastid</location>
        <location>Chloroplast</location>
    </subcellularLocation>
</comment>
<comment type="similarity">
    <text evidence="2">Belongs to the universal ribosomal protein uL22 family.</text>
</comment>
<geneLocation type="chloroplast"/>
<gene>
    <name type="primary">rpl22</name>
    <name type="ORF">PA117</name>
</gene>
<proteinExistence type="inferred from homology"/>
<protein>
    <recommendedName>
        <fullName evidence="2">Large ribosomal subunit protein uL22c</fullName>
    </recommendedName>
    <alternativeName>
        <fullName>50S ribosomal protein L22, chloroplastic</fullName>
    </alternativeName>
</protein>
<reference key="1">
    <citation type="journal article" date="2004" name="Plant Physiol.">
        <title>A comparison of rice chloroplast genomes.</title>
        <authorList>
            <person name="Tang J."/>
            <person name="Xia H."/>
            <person name="Cao M."/>
            <person name="Zhang X."/>
            <person name="Zeng W."/>
            <person name="Hu S."/>
            <person name="Tong W."/>
            <person name="Wang J."/>
            <person name="Wang J."/>
            <person name="Yu J."/>
            <person name="Yang H."/>
            <person name="Zhu L."/>
        </authorList>
    </citation>
    <scope>NUCLEOTIDE SEQUENCE [LARGE SCALE GENOMIC DNA]</scope>
    <source>
        <strain>cv. PA64s</strain>
    </source>
</reference>
<evidence type="ECO:0000250" key="1"/>
<evidence type="ECO:0000305" key="2"/>
<dbReference type="EMBL" id="AY522331">
    <property type="protein sequence ID" value="AAS46211.1"/>
    <property type="molecule type" value="Genomic_DNA"/>
</dbReference>
<dbReference type="RefSeq" id="NP_039425.1">
    <property type="nucleotide sequence ID" value="NC_001320.1"/>
</dbReference>
<dbReference type="RefSeq" id="YP_009305343.1">
    <property type="nucleotide sequence ID" value="NC_031333.1"/>
</dbReference>
<dbReference type="SMR" id="P0C444"/>
<dbReference type="GeneID" id="29141411"/>
<dbReference type="GeneID" id="3131426"/>
<dbReference type="KEGG" id="osa:3131426"/>
<dbReference type="ExpressionAtlas" id="P0C444">
    <property type="expression patterns" value="baseline"/>
</dbReference>
<dbReference type="GO" id="GO:0009507">
    <property type="term" value="C:chloroplast"/>
    <property type="evidence" value="ECO:0007669"/>
    <property type="project" value="UniProtKB-SubCell"/>
</dbReference>
<dbReference type="GO" id="GO:0015934">
    <property type="term" value="C:large ribosomal subunit"/>
    <property type="evidence" value="ECO:0007669"/>
    <property type="project" value="InterPro"/>
</dbReference>
<dbReference type="GO" id="GO:0009536">
    <property type="term" value="C:plastid"/>
    <property type="evidence" value="ECO:0000305"/>
    <property type="project" value="Gramene"/>
</dbReference>
<dbReference type="GO" id="GO:0019843">
    <property type="term" value="F:rRNA binding"/>
    <property type="evidence" value="ECO:0007669"/>
    <property type="project" value="UniProtKB-UniRule"/>
</dbReference>
<dbReference type="GO" id="GO:0003735">
    <property type="term" value="F:structural constituent of ribosome"/>
    <property type="evidence" value="ECO:0007669"/>
    <property type="project" value="InterPro"/>
</dbReference>
<dbReference type="GO" id="GO:0006412">
    <property type="term" value="P:translation"/>
    <property type="evidence" value="ECO:0007669"/>
    <property type="project" value="UniProtKB-UniRule"/>
</dbReference>
<dbReference type="CDD" id="cd00336">
    <property type="entry name" value="Ribosomal_L22"/>
    <property type="match status" value="1"/>
</dbReference>
<dbReference type="FunFam" id="3.90.470.10:FF:000004">
    <property type="entry name" value="50S ribosomal protein L22, chloroplastic"/>
    <property type="match status" value="1"/>
</dbReference>
<dbReference type="Gene3D" id="3.90.470.10">
    <property type="entry name" value="Ribosomal protein L22/L17"/>
    <property type="match status" value="1"/>
</dbReference>
<dbReference type="HAMAP" id="MF_01331_B">
    <property type="entry name" value="Ribosomal_uL22_B"/>
    <property type="match status" value="1"/>
</dbReference>
<dbReference type="InterPro" id="IPR001063">
    <property type="entry name" value="Ribosomal_uL22"/>
</dbReference>
<dbReference type="InterPro" id="IPR005727">
    <property type="entry name" value="Ribosomal_uL22_bac/chlpt-type"/>
</dbReference>
<dbReference type="InterPro" id="IPR047867">
    <property type="entry name" value="Ribosomal_uL22_bac/org-type"/>
</dbReference>
<dbReference type="InterPro" id="IPR018260">
    <property type="entry name" value="Ribosomal_uL22_CS"/>
</dbReference>
<dbReference type="InterPro" id="IPR036394">
    <property type="entry name" value="Ribosomal_uL22_sf"/>
</dbReference>
<dbReference type="NCBIfam" id="TIGR01044">
    <property type="entry name" value="rplV_bact"/>
    <property type="match status" value="1"/>
</dbReference>
<dbReference type="PANTHER" id="PTHR13501">
    <property type="entry name" value="CHLOROPLAST 50S RIBOSOMAL PROTEIN L22-RELATED"/>
    <property type="match status" value="1"/>
</dbReference>
<dbReference type="PANTHER" id="PTHR13501:SF10">
    <property type="entry name" value="LARGE RIBOSOMAL SUBUNIT PROTEIN UL22M"/>
    <property type="match status" value="1"/>
</dbReference>
<dbReference type="Pfam" id="PF00237">
    <property type="entry name" value="Ribosomal_L22"/>
    <property type="match status" value="1"/>
</dbReference>
<dbReference type="SUPFAM" id="SSF54843">
    <property type="entry name" value="Ribosomal protein L22"/>
    <property type="match status" value="1"/>
</dbReference>
<dbReference type="PROSITE" id="PS00464">
    <property type="entry name" value="RIBOSOMAL_L22"/>
    <property type="match status" value="1"/>
</dbReference>
<accession>P0C444</accession>
<accession>P12140</accession>
<accession>Q6QY46</accession>
<accession>Q7F1T7</accession>
<sequence length="149" mass="17683">MTSFKLVKYTPRIKKKKSGLRKLARKVPTDRLLKFERVFKAQKRIHMSVFKVQRVLDEIRWRYYEETVMILNLMPYRASYPILKLVYSAAANATHYRDFDKANLFITKAEVSRSTIMNKFRPRARGRSSPIKKTMCHITIVLNIVKKSK</sequence>